<feature type="signal peptide" evidence="2">
    <location>
        <begin position="1"/>
        <end position="29"/>
    </location>
</feature>
<feature type="chain" id="PRO_0000003989" description="Protocadherin gamma-C5">
    <location>
        <begin position="30"/>
        <end position="944"/>
    </location>
</feature>
<feature type="topological domain" description="Extracellular" evidence="2">
    <location>
        <begin position="30"/>
        <end position="693"/>
    </location>
</feature>
<feature type="transmembrane region" description="Helical" evidence="2">
    <location>
        <begin position="694"/>
        <end position="714"/>
    </location>
</feature>
<feature type="topological domain" description="Cytoplasmic" evidence="2">
    <location>
        <begin position="715"/>
        <end position="944"/>
    </location>
</feature>
<feature type="domain" description="Cadherin 1" evidence="3">
    <location>
        <begin position="30"/>
        <end position="133"/>
    </location>
</feature>
<feature type="domain" description="Cadherin 2" evidence="3">
    <location>
        <begin position="134"/>
        <end position="242"/>
    </location>
</feature>
<feature type="domain" description="Cadherin 3" evidence="3">
    <location>
        <begin position="243"/>
        <end position="350"/>
    </location>
</feature>
<feature type="domain" description="Cadherin 4" evidence="3">
    <location>
        <begin position="351"/>
        <end position="454"/>
    </location>
</feature>
<feature type="domain" description="Cadherin 5" evidence="3">
    <location>
        <begin position="455"/>
        <end position="564"/>
    </location>
</feature>
<feature type="domain" description="Cadherin 6" evidence="3">
    <location>
        <begin position="571"/>
        <end position="677"/>
    </location>
</feature>
<feature type="region of interest" description="Disordered" evidence="4">
    <location>
        <begin position="722"/>
        <end position="747"/>
    </location>
</feature>
<feature type="region of interest" description="Disordered" evidence="4">
    <location>
        <begin position="812"/>
        <end position="853"/>
    </location>
</feature>
<feature type="region of interest" description="Disordered" evidence="4">
    <location>
        <begin position="914"/>
        <end position="944"/>
    </location>
</feature>
<feature type="compositionally biased region" description="Polar residues" evidence="4">
    <location>
        <begin position="820"/>
        <end position="853"/>
    </location>
</feature>
<feature type="compositionally biased region" description="Basic residues" evidence="4">
    <location>
        <begin position="934"/>
        <end position="944"/>
    </location>
</feature>
<feature type="glycosylation site" description="N-linked (GlcNAc...) asparagine" evidence="2">
    <location>
        <position position="265"/>
    </location>
</feature>
<feature type="glycosylation site" description="N-linked (GlcNAc...) asparagine" evidence="2">
    <location>
        <position position="443"/>
    </location>
</feature>
<feature type="glycosylation site" description="N-linked (GlcNAc...) asparagine" evidence="2">
    <location>
        <position position="547"/>
    </location>
</feature>
<feature type="splice variant" id="VSP_008702" description="In isoform 2." evidence="5">
    <original>QAPPNTDWRFSQAQRPGTSGSQNGDDTGTWPNNQFDTEMLQAMILASASEAADGSSTL</original>
    <variation>VRGSAPPRATPGGGTGEAARPHKGLNLHPLLSGRLGRWLRSTRFSGSLDRLRETRVAD</variation>
    <location>
        <begin position="821"/>
        <end position="878"/>
    </location>
</feature>
<feature type="splice variant" id="VSP_008703" description="In isoform 2." evidence="5">
    <location>
        <begin position="879"/>
        <end position="944"/>
    </location>
</feature>
<feature type="sequence variant" id="VAR_048574" description="In dbSNP:rs2233603.">
    <original>G</original>
    <variation>S</variation>
    <location>
        <position position="275"/>
    </location>
</feature>
<feature type="sequence variant" id="VAR_024394" description="In dbSNP:rs2074912.">
    <original>D</original>
    <variation>G</variation>
    <location>
        <position position="570"/>
    </location>
</feature>
<keyword id="KW-0025">Alternative splicing</keyword>
<keyword id="KW-0106">Calcium</keyword>
<keyword id="KW-0130">Cell adhesion</keyword>
<keyword id="KW-1003">Cell membrane</keyword>
<keyword id="KW-0325">Glycoprotein</keyword>
<keyword id="KW-0472">Membrane</keyword>
<keyword id="KW-1267">Proteomics identification</keyword>
<keyword id="KW-1185">Reference proteome</keyword>
<keyword id="KW-0677">Repeat</keyword>
<keyword id="KW-0732">Signal</keyword>
<keyword id="KW-0812">Transmembrane</keyword>
<keyword id="KW-1133">Transmembrane helix</keyword>
<comment type="function">
    <text>Potential calcium-dependent cell-adhesion protein. May be involved in the establishment and maintenance of specific neuronal connections in the brain.</text>
</comment>
<comment type="subcellular location">
    <subcellularLocation>
        <location evidence="1">Cell membrane</location>
        <topology evidence="1">Single-pass type I membrane protein</topology>
    </subcellularLocation>
</comment>
<comment type="alternative products">
    <event type="alternative splicing"/>
    <isoform>
        <id>Q9Y5F6-1</id>
        <name>1</name>
        <sequence type="displayed"/>
    </isoform>
    <isoform>
        <id>Q9Y5F6-2</id>
        <name>2</name>
        <name>Short</name>
        <sequence type="described" ref="VSP_008702 VSP_008703"/>
    </isoform>
</comment>
<evidence type="ECO:0000250" key="1"/>
<evidence type="ECO:0000255" key="2"/>
<evidence type="ECO:0000255" key="3">
    <source>
        <dbReference type="PROSITE-ProRule" id="PRU00043"/>
    </source>
</evidence>
<evidence type="ECO:0000256" key="4">
    <source>
        <dbReference type="SAM" id="MobiDB-lite"/>
    </source>
</evidence>
<evidence type="ECO:0000303" key="5">
    <source>
    </source>
</evidence>
<dbReference type="EMBL" id="AF152339">
    <property type="protein sequence ID" value="AAD43733.1"/>
    <property type="molecule type" value="mRNA"/>
</dbReference>
<dbReference type="EMBL" id="AF152526">
    <property type="protein sequence ID" value="AAD43786.1"/>
    <property type="molecule type" value="mRNA"/>
</dbReference>
<dbReference type="CCDS" id="CCDS4263.1">
    <molecule id="Q9Y5F6-1"/>
</dbReference>
<dbReference type="CCDS" id="CCDS75350.1">
    <molecule id="Q9Y5F6-2"/>
</dbReference>
<dbReference type="RefSeq" id="NP_061752.1">
    <molecule id="Q9Y5F6-1"/>
    <property type="nucleotide sequence ID" value="NM_018929.3"/>
</dbReference>
<dbReference type="RefSeq" id="NP_115783.1">
    <molecule id="Q9Y5F6-2"/>
    <property type="nucleotide sequence ID" value="NM_032407.1"/>
</dbReference>
<dbReference type="SMR" id="Q9Y5F6"/>
<dbReference type="BioGRID" id="121037">
    <property type="interactions" value="22"/>
</dbReference>
<dbReference type="FunCoup" id="Q9Y5F6">
    <property type="interactions" value="7"/>
</dbReference>
<dbReference type="IntAct" id="Q9Y5F6">
    <property type="interactions" value="19"/>
</dbReference>
<dbReference type="MINT" id="Q9Y5F6"/>
<dbReference type="STRING" id="9606.ENSP00000252087"/>
<dbReference type="GlyCosmos" id="Q9Y5F6">
    <property type="glycosylation" value="3 sites, No reported glycans"/>
</dbReference>
<dbReference type="GlyGen" id="Q9Y5F6">
    <property type="glycosylation" value="4 sites, 9 N-linked glycans (1 site)"/>
</dbReference>
<dbReference type="iPTMnet" id="Q9Y5F6"/>
<dbReference type="PhosphoSitePlus" id="Q9Y5F6"/>
<dbReference type="BioMuta" id="PCDHGC5"/>
<dbReference type="DMDM" id="37999826"/>
<dbReference type="jPOST" id="Q9Y5F6"/>
<dbReference type="MassIVE" id="Q9Y5F6"/>
<dbReference type="PaxDb" id="9606-ENSP00000252087"/>
<dbReference type="PeptideAtlas" id="Q9Y5F6"/>
<dbReference type="ProteomicsDB" id="86353">
    <molecule id="Q9Y5F6-1"/>
</dbReference>
<dbReference type="ProteomicsDB" id="86354">
    <molecule id="Q9Y5F6-2"/>
</dbReference>
<dbReference type="Antibodypedia" id="35054">
    <property type="antibodies" value="246 antibodies from 17 providers"/>
</dbReference>
<dbReference type="DNASU" id="56097"/>
<dbReference type="Ensembl" id="ENST00000252087.3">
    <molecule id="Q9Y5F6-1"/>
    <property type="protein sequence ID" value="ENSP00000252087.2"/>
    <property type="gene ID" value="ENSG00000240764.4"/>
</dbReference>
<dbReference type="Ensembl" id="ENST00000610789.1">
    <molecule id="Q9Y5F6-2"/>
    <property type="protein sequence ID" value="ENSP00000482569.1"/>
    <property type="gene ID" value="ENSG00000240764.4"/>
</dbReference>
<dbReference type="GeneID" id="56097"/>
<dbReference type="KEGG" id="hsa:56097"/>
<dbReference type="MANE-Select" id="ENST00000252087.3">
    <property type="protein sequence ID" value="ENSP00000252087.2"/>
    <property type="RefSeq nucleotide sequence ID" value="NM_018929.3"/>
    <property type="RefSeq protein sequence ID" value="NP_061752.1"/>
</dbReference>
<dbReference type="UCSC" id="uc003lla.3">
    <molecule id="Q9Y5F6-1"/>
    <property type="organism name" value="human"/>
</dbReference>
<dbReference type="AGR" id="HGNC:8718"/>
<dbReference type="CTD" id="56097"/>
<dbReference type="DisGeNET" id="56097"/>
<dbReference type="GeneCards" id="PCDHGC5"/>
<dbReference type="HGNC" id="HGNC:8718">
    <property type="gene designation" value="PCDHGC5"/>
</dbReference>
<dbReference type="HPA" id="ENSG00000240764">
    <property type="expression patterns" value="Tissue enriched (brain)"/>
</dbReference>
<dbReference type="MIM" id="604968">
    <property type="type" value="gene"/>
</dbReference>
<dbReference type="MIM" id="606306">
    <property type="type" value="gene"/>
</dbReference>
<dbReference type="neXtProt" id="NX_Q9Y5F6"/>
<dbReference type="OpenTargets" id="ENSG00000240764"/>
<dbReference type="PharmGKB" id="PA33066"/>
<dbReference type="VEuPathDB" id="HostDB:ENSG00000240764"/>
<dbReference type="eggNOG" id="KOG3594">
    <property type="taxonomic scope" value="Eukaryota"/>
</dbReference>
<dbReference type="GeneTree" id="ENSGT00940000162232"/>
<dbReference type="HOGENOM" id="CLU_006480_0_0_1"/>
<dbReference type="InParanoid" id="Q9Y5F6"/>
<dbReference type="OMA" id="MLQIMVG"/>
<dbReference type="OrthoDB" id="6252479at2759"/>
<dbReference type="PAN-GO" id="Q9Y5F6">
    <property type="GO annotations" value="2 GO annotations based on evolutionary models"/>
</dbReference>
<dbReference type="PhylomeDB" id="Q9Y5F6"/>
<dbReference type="TreeFam" id="TF332299"/>
<dbReference type="PathwayCommons" id="Q9Y5F6"/>
<dbReference type="SignaLink" id="Q9Y5F6"/>
<dbReference type="SIGNOR" id="Q9Y5F6"/>
<dbReference type="BioGRID-ORCS" id="56097">
    <property type="hits" value="12 hits in 1099 CRISPR screens"/>
</dbReference>
<dbReference type="GenomeRNAi" id="56097"/>
<dbReference type="Pharos" id="Q9Y5F6">
    <property type="development level" value="Tdark"/>
</dbReference>
<dbReference type="PRO" id="PR:Q9Y5F6"/>
<dbReference type="Proteomes" id="UP000005640">
    <property type="component" value="Chromosome 5"/>
</dbReference>
<dbReference type="RNAct" id="Q9Y5F6">
    <property type="molecule type" value="protein"/>
</dbReference>
<dbReference type="Bgee" id="ENSG00000240764">
    <property type="expression patterns" value="Expressed in prefrontal cortex and 87 other cell types or tissues"/>
</dbReference>
<dbReference type="GO" id="GO:0005886">
    <property type="term" value="C:plasma membrane"/>
    <property type="evidence" value="ECO:0000318"/>
    <property type="project" value="GO_Central"/>
</dbReference>
<dbReference type="GO" id="GO:0005509">
    <property type="term" value="F:calcium ion binding"/>
    <property type="evidence" value="ECO:0007669"/>
    <property type="project" value="InterPro"/>
</dbReference>
<dbReference type="GO" id="GO:0007155">
    <property type="term" value="P:cell adhesion"/>
    <property type="evidence" value="ECO:0000318"/>
    <property type="project" value="GO_Central"/>
</dbReference>
<dbReference type="GO" id="GO:0007156">
    <property type="term" value="P:homophilic cell adhesion via plasma membrane adhesion molecules"/>
    <property type="evidence" value="ECO:0007669"/>
    <property type="project" value="InterPro"/>
</dbReference>
<dbReference type="GO" id="GO:0043524">
    <property type="term" value="P:negative regulation of neuron apoptotic process"/>
    <property type="evidence" value="ECO:0007669"/>
    <property type="project" value="Ensembl"/>
</dbReference>
<dbReference type="GO" id="GO:0007399">
    <property type="term" value="P:nervous system development"/>
    <property type="evidence" value="ECO:0007669"/>
    <property type="project" value="UniProtKB-ARBA"/>
</dbReference>
<dbReference type="GO" id="GO:0050808">
    <property type="term" value="P:synapse organization"/>
    <property type="evidence" value="ECO:0007669"/>
    <property type="project" value="Ensembl"/>
</dbReference>
<dbReference type="CDD" id="cd11304">
    <property type="entry name" value="Cadherin_repeat"/>
    <property type="match status" value="6"/>
</dbReference>
<dbReference type="FunFam" id="2.60.40.60:FF:000004">
    <property type="entry name" value="Protocadherin 1 gamma 2"/>
    <property type="match status" value="1"/>
</dbReference>
<dbReference type="FunFam" id="2.60.40.60:FF:000002">
    <property type="entry name" value="Protocadherin alpha 2"/>
    <property type="match status" value="1"/>
</dbReference>
<dbReference type="FunFam" id="2.60.40.60:FF:000006">
    <property type="entry name" value="Protocadherin alpha 2"/>
    <property type="match status" value="1"/>
</dbReference>
<dbReference type="FunFam" id="2.60.40.60:FF:000129">
    <property type="entry name" value="protocadherin alpha-C2 isoform X1"/>
    <property type="match status" value="1"/>
</dbReference>
<dbReference type="FunFam" id="2.60.40.60:FF:000018">
    <property type="entry name" value="Protocadherin gamma c3"/>
    <property type="match status" value="1"/>
</dbReference>
<dbReference type="FunFam" id="2.60.40.60:FF:000216">
    <property type="entry name" value="protocadherin gamma-C5 isoform X1"/>
    <property type="match status" value="1"/>
</dbReference>
<dbReference type="Gene3D" id="2.60.40.60">
    <property type="entry name" value="Cadherins"/>
    <property type="match status" value="6"/>
</dbReference>
<dbReference type="InterPro" id="IPR002126">
    <property type="entry name" value="Cadherin-like_dom"/>
</dbReference>
<dbReference type="InterPro" id="IPR015919">
    <property type="entry name" value="Cadherin-like_sf"/>
</dbReference>
<dbReference type="InterPro" id="IPR032455">
    <property type="entry name" value="Cadherin_C"/>
</dbReference>
<dbReference type="InterPro" id="IPR031904">
    <property type="entry name" value="Cadherin_CBD"/>
</dbReference>
<dbReference type="InterPro" id="IPR020894">
    <property type="entry name" value="Cadherin_CS"/>
</dbReference>
<dbReference type="InterPro" id="IPR013164">
    <property type="entry name" value="Cadherin_N"/>
</dbReference>
<dbReference type="InterPro" id="IPR050174">
    <property type="entry name" value="Protocadherin/Cadherin-CA"/>
</dbReference>
<dbReference type="PANTHER" id="PTHR24028">
    <property type="entry name" value="CADHERIN-87A"/>
    <property type="match status" value="1"/>
</dbReference>
<dbReference type="PANTHER" id="PTHR24028:SF349">
    <property type="entry name" value="PROTOCADHERIN GAMMA-C5"/>
    <property type="match status" value="1"/>
</dbReference>
<dbReference type="Pfam" id="PF00028">
    <property type="entry name" value="Cadherin"/>
    <property type="match status" value="5"/>
</dbReference>
<dbReference type="Pfam" id="PF08266">
    <property type="entry name" value="Cadherin_2"/>
    <property type="match status" value="1"/>
</dbReference>
<dbReference type="Pfam" id="PF16492">
    <property type="entry name" value="Cadherin_C_2"/>
    <property type="match status" value="1"/>
</dbReference>
<dbReference type="Pfam" id="PF15974">
    <property type="entry name" value="Cadherin_tail"/>
    <property type="match status" value="1"/>
</dbReference>
<dbReference type="PRINTS" id="PR00205">
    <property type="entry name" value="CADHERIN"/>
</dbReference>
<dbReference type="SMART" id="SM00112">
    <property type="entry name" value="CA"/>
    <property type="match status" value="6"/>
</dbReference>
<dbReference type="SUPFAM" id="SSF49313">
    <property type="entry name" value="Cadherin-like"/>
    <property type="match status" value="6"/>
</dbReference>
<dbReference type="PROSITE" id="PS00232">
    <property type="entry name" value="CADHERIN_1"/>
    <property type="match status" value="5"/>
</dbReference>
<dbReference type="PROSITE" id="PS50268">
    <property type="entry name" value="CADHERIN_2"/>
    <property type="match status" value="6"/>
</dbReference>
<sequence>MGPKTLPQLAGKWQVLCMLSLCCWGWVSGQLRYSVVEESEPGTLVGNVAQDLGLKMTDLLSRRLQLGSEENGRYFSLSLMSGALAVNQKIDRESLCGASTSCLLPVQVVTEHPLELIRVEVEILDLNDNSPSFATPEREMRISESAASGARFPLDSAQDPDVGTNTVSFYTLSPNSHFSLNVKTLKDGKPFPELVLEQQLDREAQARHQLVLTAVDGGTPARSGTTLISVIVLDINDNAPTFQSSVLRVGIPENAPIGTLLLRLNATDPDEGTNGQLDYSFGDHTSEAVRNLFGLDPSSGAIHVLGPIDFEESRFYEIHARARDQGQPAMEGHCVIQVDVGDVNDNAPEVLLASLANPVLESTPVGTVVGLFNVRDRDSGRNGEVSLDISPDLPFQIKPSENHYSLLTSQPLDREATSHYIIELLASDAGSPSLHKHLTIRLNISDVNDNAPRFNQQLYTAYILENRPPGSLLCTVAASDPDTGDNARLTYSIVGNQVQGAPASSFVYVNPEDGRIFAQRTFDYELLQMLQIVVGVRDSGSPPLHANTSLHVFVLDENDNAPAVLHPRPDWEHSAPQRLPRSAPPGSLVTKVTAVDADAGHNAWLSYSLLPQSTAPGLFLVSTHTGEVRTARALLEDDSDTQQVVVLVRDNGDPSLSSTATVLLVLEDEDPEEMPKSSDFLIHPPERSDLTLYLIVALATVSLLSLVTFTFLSAKCLQGNADGDGGGGQCCRRQDSPSPDFYKQSSPNLQVSSDGTLKYMEVTLRPTDSQSHCYRTCFSPASDGSDFTFLRPLSVQQPTALALEPDAIRSRSNTLRERSQQAPPNTDWRFSQAQRPGTSGSQNGDDTGTWPNNQFDTEMLQAMILASASEAADGSSTLGGGAGTMGLSARYGPQFTLQHVPDYRQNVYIPGSNATLTNAAGKRDGKAPAGGNGNKKKSGKKEKK</sequence>
<organism>
    <name type="scientific">Homo sapiens</name>
    <name type="common">Human</name>
    <dbReference type="NCBI Taxonomy" id="9606"/>
    <lineage>
        <taxon>Eukaryota</taxon>
        <taxon>Metazoa</taxon>
        <taxon>Chordata</taxon>
        <taxon>Craniata</taxon>
        <taxon>Vertebrata</taxon>
        <taxon>Euteleostomi</taxon>
        <taxon>Mammalia</taxon>
        <taxon>Eutheria</taxon>
        <taxon>Euarchontoglires</taxon>
        <taxon>Primates</taxon>
        <taxon>Haplorrhini</taxon>
        <taxon>Catarrhini</taxon>
        <taxon>Hominidae</taxon>
        <taxon>Homo</taxon>
    </lineage>
</organism>
<protein>
    <recommendedName>
        <fullName>Protocadherin gamma-C5</fullName>
        <shortName>PCDH-gamma-C5</shortName>
    </recommendedName>
</protein>
<proteinExistence type="evidence at protein level"/>
<accession>Q9Y5F6</accession>
<accession>Q9Y5C2</accession>
<gene>
    <name type="primary">PCDHGC5</name>
</gene>
<reference key="1">
    <citation type="journal article" date="1999" name="Cell">
        <title>A striking organization of a large family of human neural cadherin-like cell adhesion genes.</title>
        <authorList>
            <person name="Wu Q."/>
            <person name="Maniatis T."/>
        </authorList>
    </citation>
    <scope>NUCLEOTIDE SEQUENCE [MRNA] (ISOFORMS 1 AND 2)</scope>
    <source>
        <tissue>Brain</tissue>
    </source>
</reference>
<name>PCDGM_HUMAN</name>